<feature type="chain" id="PRO_1000060826" description="3-hydroxyacyl-[acyl-carrier-protein] dehydratase FabZ">
    <location>
        <begin position="1"/>
        <end position="147"/>
    </location>
</feature>
<feature type="active site" evidence="1">
    <location>
        <position position="48"/>
    </location>
</feature>
<organism>
    <name type="scientific">Aliarcobacter butzleri (strain RM4018)</name>
    <name type="common">Arcobacter butzleri</name>
    <dbReference type="NCBI Taxonomy" id="367737"/>
    <lineage>
        <taxon>Bacteria</taxon>
        <taxon>Pseudomonadati</taxon>
        <taxon>Campylobacterota</taxon>
        <taxon>Epsilonproteobacteria</taxon>
        <taxon>Campylobacterales</taxon>
        <taxon>Arcobacteraceae</taxon>
        <taxon>Aliarcobacter</taxon>
    </lineage>
</organism>
<comment type="function">
    <text evidence="1">Involved in unsaturated fatty acids biosynthesis. Catalyzes the dehydration of short chain beta-hydroxyacyl-ACPs and long chain saturated and unsaturated beta-hydroxyacyl-ACPs.</text>
</comment>
<comment type="catalytic activity">
    <reaction evidence="1">
        <text>a (3R)-hydroxyacyl-[ACP] = a (2E)-enoyl-[ACP] + H2O</text>
        <dbReference type="Rhea" id="RHEA:13097"/>
        <dbReference type="Rhea" id="RHEA-COMP:9925"/>
        <dbReference type="Rhea" id="RHEA-COMP:9945"/>
        <dbReference type="ChEBI" id="CHEBI:15377"/>
        <dbReference type="ChEBI" id="CHEBI:78784"/>
        <dbReference type="ChEBI" id="CHEBI:78827"/>
        <dbReference type="EC" id="4.2.1.59"/>
    </reaction>
</comment>
<comment type="subcellular location">
    <subcellularLocation>
        <location evidence="1">Cytoplasm</location>
    </subcellularLocation>
</comment>
<comment type="similarity">
    <text evidence="1">Belongs to the thioester dehydratase family. FabZ subfamily.</text>
</comment>
<sequence>MLDIMQIQEILPHRYPLLLVDRITDMEVKKSIKGYKNISISEPAFQGHFPGHPIYPGVLILEGMAQCGGVLALKSSDLTDEEMKEKVIYFMSIDNAKFRNPVRPGDRLDYELTAVKMKSTLMVLEGKAYVDGKLTAEAEFKAMIVDK</sequence>
<keyword id="KW-0963">Cytoplasm</keyword>
<keyword id="KW-0441">Lipid A biosynthesis</keyword>
<keyword id="KW-0444">Lipid biosynthesis</keyword>
<keyword id="KW-0443">Lipid metabolism</keyword>
<keyword id="KW-0456">Lyase</keyword>
<keyword id="KW-1185">Reference proteome</keyword>
<accession>A8EWV6</accession>
<name>FABZ_ALIB4</name>
<proteinExistence type="inferred from homology"/>
<reference key="1">
    <citation type="journal article" date="2007" name="PLoS ONE">
        <title>The complete genome sequence and analysis of the Epsilonproteobacterium Arcobacter butzleri.</title>
        <authorList>
            <person name="Miller W.G."/>
            <person name="Parker C.T."/>
            <person name="Rubenfield M."/>
            <person name="Mendz G.L."/>
            <person name="Woesten M.M.S.M."/>
            <person name="Ussery D.W."/>
            <person name="Stolz J.F."/>
            <person name="Binnewies T.T."/>
            <person name="Hallin P.F."/>
            <person name="Wang G."/>
            <person name="Malek J.A."/>
            <person name="Rogosin A."/>
            <person name="Stanker L.H."/>
            <person name="Mandrell R.E."/>
        </authorList>
    </citation>
    <scope>NUCLEOTIDE SEQUENCE [LARGE SCALE GENOMIC DNA]</scope>
    <source>
        <strain>RM4018</strain>
    </source>
</reference>
<gene>
    <name evidence="1" type="primary">fabZ</name>
    <name type="ordered locus">Abu_2216</name>
</gene>
<evidence type="ECO:0000255" key="1">
    <source>
        <dbReference type="HAMAP-Rule" id="MF_00406"/>
    </source>
</evidence>
<protein>
    <recommendedName>
        <fullName evidence="1">3-hydroxyacyl-[acyl-carrier-protein] dehydratase FabZ</fullName>
        <ecNumber evidence="1">4.2.1.59</ecNumber>
    </recommendedName>
    <alternativeName>
        <fullName evidence="1">(3R)-hydroxymyristoyl-[acyl-carrier-protein] dehydratase</fullName>
        <shortName evidence="1">(3R)-hydroxymyristoyl-ACP dehydrase</shortName>
    </alternativeName>
    <alternativeName>
        <fullName evidence="1">Beta-hydroxyacyl-ACP dehydratase</fullName>
    </alternativeName>
</protein>
<dbReference type="EC" id="4.2.1.59" evidence="1"/>
<dbReference type="EMBL" id="CP000361">
    <property type="protein sequence ID" value="ABV68429.1"/>
    <property type="molecule type" value="Genomic_DNA"/>
</dbReference>
<dbReference type="RefSeq" id="WP_012148065.1">
    <property type="nucleotide sequence ID" value="NC_009850.1"/>
</dbReference>
<dbReference type="SMR" id="A8EWV6"/>
<dbReference type="STRING" id="367737.Abu_2216"/>
<dbReference type="GeneID" id="24304702"/>
<dbReference type="KEGG" id="abu:Abu_2216"/>
<dbReference type="eggNOG" id="COG0764">
    <property type="taxonomic scope" value="Bacteria"/>
</dbReference>
<dbReference type="HOGENOM" id="CLU_078912_1_2_7"/>
<dbReference type="Proteomes" id="UP000001136">
    <property type="component" value="Chromosome"/>
</dbReference>
<dbReference type="GO" id="GO:0005737">
    <property type="term" value="C:cytoplasm"/>
    <property type="evidence" value="ECO:0007669"/>
    <property type="project" value="UniProtKB-SubCell"/>
</dbReference>
<dbReference type="GO" id="GO:0016020">
    <property type="term" value="C:membrane"/>
    <property type="evidence" value="ECO:0007669"/>
    <property type="project" value="GOC"/>
</dbReference>
<dbReference type="GO" id="GO:0019171">
    <property type="term" value="F:(3R)-hydroxyacyl-[acyl-carrier-protein] dehydratase activity"/>
    <property type="evidence" value="ECO:0007669"/>
    <property type="project" value="UniProtKB-EC"/>
</dbReference>
<dbReference type="GO" id="GO:0006633">
    <property type="term" value="P:fatty acid biosynthetic process"/>
    <property type="evidence" value="ECO:0007669"/>
    <property type="project" value="UniProtKB-UniRule"/>
</dbReference>
<dbReference type="GO" id="GO:0009245">
    <property type="term" value="P:lipid A biosynthetic process"/>
    <property type="evidence" value="ECO:0007669"/>
    <property type="project" value="UniProtKB-UniRule"/>
</dbReference>
<dbReference type="CDD" id="cd01288">
    <property type="entry name" value="FabZ"/>
    <property type="match status" value="1"/>
</dbReference>
<dbReference type="FunFam" id="3.10.129.10:FF:000001">
    <property type="entry name" value="3-hydroxyacyl-[acyl-carrier-protein] dehydratase FabZ"/>
    <property type="match status" value="1"/>
</dbReference>
<dbReference type="Gene3D" id="3.10.129.10">
    <property type="entry name" value="Hotdog Thioesterase"/>
    <property type="match status" value="1"/>
</dbReference>
<dbReference type="HAMAP" id="MF_00406">
    <property type="entry name" value="FabZ"/>
    <property type="match status" value="1"/>
</dbReference>
<dbReference type="InterPro" id="IPR013114">
    <property type="entry name" value="FabA_FabZ"/>
</dbReference>
<dbReference type="InterPro" id="IPR010084">
    <property type="entry name" value="FabZ"/>
</dbReference>
<dbReference type="InterPro" id="IPR029069">
    <property type="entry name" value="HotDog_dom_sf"/>
</dbReference>
<dbReference type="NCBIfam" id="TIGR01750">
    <property type="entry name" value="fabZ"/>
    <property type="match status" value="1"/>
</dbReference>
<dbReference type="NCBIfam" id="NF000582">
    <property type="entry name" value="PRK00006.1"/>
    <property type="match status" value="1"/>
</dbReference>
<dbReference type="PANTHER" id="PTHR30272">
    <property type="entry name" value="3-HYDROXYACYL-[ACYL-CARRIER-PROTEIN] DEHYDRATASE"/>
    <property type="match status" value="1"/>
</dbReference>
<dbReference type="PANTHER" id="PTHR30272:SF1">
    <property type="entry name" value="3-HYDROXYACYL-[ACYL-CARRIER-PROTEIN] DEHYDRATASE"/>
    <property type="match status" value="1"/>
</dbReference>
<dbReference type="Pfam" id="PF07977">
    <property type="entry name" value="FabA"/>
    <property type="match status" value="1"/>
</dbReference>
<dbReference type="SUPFAM" id="SSF54637">
    <property type="entry name" value="Thioesterase/thiol ester dehydrase-isomerase"/>
    <property type="match status" value="1"/>
</dbReference>